<comment type="function">
    <text evidence="1">This protein binds specifically to 23S rRNA; its binding is stimulated by other ribosomal proteins, e.g. L4, L17, and L20. It is important during the early stages of 50S assembly. It makes multiple contacts with different domains of the 23S rRNA in the assembled 50S subunit and ribosome (By similarity).</text>
</comment>
<comment type="function">
    <text evidence="1">The globular domain of the protein is located near the polypeptide exit tunnel on the outside of the subunit, while an extended beta-hairpin is found that lines the wall of the exit tunnel in the center of the 70S ribosome.</text>
</comment>
<comment type="subunit">
    <text evidence="1">Part of the 50S ribosomal subunit.</text>
</comment>
<comment type="similarity">
    <text evidence="1">Belongs to the universal ribosomal protein uL22 family.</text>
</comment>
<gene>
    <name evidence="1" type="primary">rplV</name>
    <name type="ordered locus">TT_C1323</name>
</gene>
<reference key="1">
    <citation type="journal article" date="2004" name="Nat. Biotechnol.">
        <title>The genome sequence of the extreme thermophile Thermus thermophilus.</title>
        <authorList>
            <person name="Henne A."/>
            <person name="Brueggemann H."/>
            <person name="Raasch C."/>
            <person name="Wiezer A."/>
            <person name="Hartsch T."/>
            <person name="Liesegang H."/>
            <person name="Johann A."/>
            <person name="Lienard T."/>
            <person name="Gohl O."/>
            <person name="Martinez-Arias R."/>
            <person name="Jacobi C."/>
            <person name="Starkuviene V."/>
            <person name="Schlenczeck S."/>
            <person name="Dencker S."/>
            <person name="Huber R."/>
            <person name="Klenk H.-P."/>
            <person name="Kramer W."/>
            <person name="Merkl R."/>
            <person name="Gottschalk G."/>
            <person name="Fritz H.-J."/>
        </authorList>
    </citation>
    <scope>NUCLEOTIDE SEQUENCE [LARGE SCALE GENOMIC DNA]</scope>
    <source>
        <strain>ATCC BAA-163 / DSM 7039 / HB27</strain>
    </source>
</reference>
<proteinExistence type="evidence at protein level"/>
<name>RL22_THET2</name>
<protein>
    <recommendedName>
        <fullName evidence="1">Large ribosomal subunit protein uL22</fullName>
    </recommendedName>
    <alternativeName>
        <fullName evidence="2">50S ribosomal protein L22</fullName>
    </alternativeName>
</protein>
<accession>Q72I09</accession>
<dbReference type="EMBL" id="AE017221">
    <property type="protein sequence ID" value="AAS81665.1"/>
    <property type="molecule type" value="Genomic_DNA"/>
</dbReference>
<dbReference type="RefSeq" id="WP_011173710.1">
    <property type="nucleotide sequence ID" value="NC_005835.1"/>
</dbReference>
<dbReference type="PDB" id="4V4I">
    <property type="method" value="X-ray"/>
    <property type="resolution" value="3.71 A"/>
    <property type="chains" value="Q=1-113"/>
</dbReference>
<dbReference type="PDB" id="4V4J">
    <property type="method" value="X-ray"/>
    <property type="resolution" value="3.83 A"/>
    <property type="chains" value="Q=1-113"/>
</dbReference>
<dbReference type="PDB" id="4V63">
    <property type="method" value="X-ray"/>
    <property type="resolution" value="3.21 A"/>
    <property type="chains" value="BW/DW=1-113"/>
</dbReference>
<dbReference type="PDB" id="4V67">
    <property type="method" value="X-ray"/>
    <property type="resolution" value="3.00 A"/>
    <property type="chains" value="BW/DW=1-113"/>
</dbReference>
<dbReference type="PDB" id="4V7P">
    <property type="method" value="X-ray"/>
    <property type="resolution" value="3.62 A"/>
    <property type="chains" value="BS/CS=1-112"/>
</dbReference>
<dbReference type="PDB" id="4V83">
    <property type="method" value="X-ray"/>
    <property type="resolution" value="3.50 A"/>
    <property type="chains" value="BS/DS=1-112"/>
</dbReference>
<dbReference type="PDB" id="4V84">
    <property type="method" value="X-ray"/>
    <property type="resolution" value="3.40 A"/>
    <property type="chains" value="BS/DS=1-112"/>
</dbReference>
<dbReference type="PDB" id="4V9J">
    <property type="method" value="X-ray"/>
    <property type="resolution" value="3.86 A"/>
    <property type="chains" value="BW/DW=1-113"/>
</dbReference>
<dbReference type="PDB" id="4V9K">
    <property type="method" value="X-ray"/>
    <property type="resolution" value="3.50 A"/>
    <property type="chains" value="BW/DW=1-113"/>
</dbReference>
<dbReference type="PDB" id="4V9L">
    <property type="method" value="X-ray"/>
    <property type="resolution" value="3.50 A"/>
    <property type="chains" value="BW/DW=1-113"/>
</dbReference>
<dbReference type="PDB" id="4V9M">
    <property type="method" value="X-ray"/>
    <property type="resolution" value="4.00 A"/>
    <property type="chains" value="BW/DW=1-113"/>
</dbReference>
<dbReference type="PDB" id="4V9N">
    <property type="method" value="X-ray"/>
    <property type="resolution" value="3.40 A"/>
    <property type="chains" value="BW/DW=1-112"/>
</dbReference>
<dbReference type="PDB" id="4V9Q">
    <property type="method" value="X-ray"/>
    <property type="resolution" value="3.40 A"/>
    <property type="chains" value="AS/CS=1-112"/>
</dbReference>
<dbReference type="PDB" id="4W29">
    <property type="method" value="X-ray"/>
    <property type="resolution" value="3.80 A"/>
    <property type="chains" value="BW/DW=1-113"/>
</dbReference>
<dbReference type="PDB" id="4XEJ">
    <property type="method" value="X-ray"/>
    <property type="resolution" value="3.80 A"/>
    <property type="chains" value="AL22/BL22=1-112"/>
</dbReference>
<dbReference type="PDB" id="5J4D">
    <property type="method" value="X-ray"/>
    <property type="resolution" value="3.10 A"/>
    <property type="chains" value="T/YB=1-113"/>
</dbReference>
<dbReference type="PDB" id="5V8I">
    <property type="method" value="X-ray"/>
    <property type="resolution" value="3.25 A"/>
    <property type="chains" value="1W/2W=1-113"/>
</dbReference>
<dbReference type="PDB" id="6B4V">
    <property type="method" value="X-ray"/>
    <property type="resolution" value="3.40 A"/>
    <property type="chains" value="T/XB=1-113"/>
</dbReference>
<dbReference type="PDB" id="6BOH">
    <property type="method" value="X-ray"/>
    <property type="resolution" value="3.40 A"/>
    <property type="chains" value="T/YB=1-113"/>
</dbReference>
<dbReference type="PDB" id="6BOK">
    <property type="method" value="X-ray"/>
    <property type="resolution" value="3.55 A"/>
    <property type="chains" value="T/WB=1-113"/>
</dbReference>
<dbReference type="PDB" id="6N1D">
    <property type="method" value="X-ray"/>
    <property type="resolution" value="3.20 A"/>
    <property type="chains" value="AL22/BL22=1-113"/>
</dbReference>
<dbReference type="PDBsum" id="4V4I"/>
<dbReference type="PDBsum" id="4V4J"/>
<dbReference type="PDBsum" id="4V63"/>
<dbReference type="PDBsum" id="4V67"/>
<dbReference type="PDBsum" id="4V7P"/>
<dbReference type="PDBsum" id="4V83"/>
<dbReference type="PDBsum" id="4V84"/>
<dbReference type="PDBsum" id="4V9J"/>
<dbReference type="PDBsum" id="4V9K"/>
<dbReference type="PDBsum" id="4V9L"/>
<dbReference type="PDBsum" id="4V9M"/>
<dbReference type="PDBsum" id="4V9N"/>
<dbReference type="PDBsum" id="4V9Q"/>
<dbReference type="PDBsum" id="4W29"/>
<dbReference type="PDBsum" id="4XEJ"/>
<dbReference type="PDBsum" id="5J4D"/>
<dbReference type="PDBsum" id="5V8I"/>
<dbReference type="PDBsum" id="6B4V"/>
<dbReference type="PDBsum" id="6BOH"/>
<dbReference type="PDBsum" id="6BOK"/>
<dbReference type="PDBsum" id="6N1D"/>
<dbReference type="SMR" id="Q72I09"/>
<dbReference type="IntAct" id="Q72I09">
    <property type="interactions" value="4"/>
</dbReference>
<dbReference type="GeneID" id="3169835"/>
<dbReference type="KEGG" id="tth:TT_C1323"/>
<dbReference type="eggNOG" id="COG0091">
    <property type="taxonomic scope" value="Bacteria"/>
</dbReference>
<dbReference type="HOGENOM" id="CLU_083987_3_1_0"/>
<dbReference type="OrthoDB" id="9805969at2"/>
<dbReference type="Proteomes" id="UP000000592">
    <property type="component" value="Chromosome"/>
</dbReference>
<dbReference type="GO" id="GO:0022625">
    <property type="term" value="C:cytosolic large ribosomal subunit"/>
    <property type="evidence" value="ECO:0007669"/>
    <property type="project" value="TreeGrafter"/>
</dbReference>
<dbReference type="GO" id="GO:0019843">
    <property type="term" value="F:rRNA binding"/>
    <property type="evidence" value="ECO:0007669"/>
    <property type="project" value="UniProtKB-UniRule"/>
</dbReference>
<dbReference type="GO" id="GO:0003735">
    <property type="term" value="F:structural constituent of ribosome"/>
    <property type="evidence" value="ECO:0007669"/>
    <property type="project" value="InterPro"/>
</dbReference>
<dbReference type="GO" id="GO:0006412">
    <property type="term" value="P:translation"/>
    <property type="evidence" value="ECO:0007669"/>
    <property type="project" value="UniProtKB-UniRule"/>
</dbReference>
<dbReference type="CDD" id="cd00336">
    <property type="entry name" value="Ribosomal_L22"/>
    <property type="match status" value="1"/>
</dbReference>
<dbReference type="FunFam" id="3.90.470.10:FF:000011">
    <property type="entry name" value="50S ribosomal protein L22"/>
    <property type="match status" value="1"/>
</dbReference>
<dbReference type="Gene3D" id="3.90.470.10">
    <property type="entry name" value="Ribosomal protein L22/L17"/>
    <property type="match status" value="1"/>
</dbReference>
<dbReference type="HAMAP" id="MF_01331_B">
    <property type="entry name" value="Ribosomal_uL22_B"/>
    <property type="match status" value="1"/>
</dbReference>
<dbReference type="InterPro" id="IPR001063">
    <property type="entry name" value="Ribosomal_uL22"/>
</dbReference>
<dbReference type="InterPro" id="IPR005727">
    <property type="entry name" value="Ribosomal_uL22_bac/chlpt-type"/>
</dbReference>
<dbReference type="InterPro" id="IPR047867">
    <property type="entry name" value="Ribosomal_uL22_bac/org-type"/>
</dbReference>
<dbReference type="InterPro" id="IPR018260">
    <property type="entry name" value="Ribosomal_uL22_CS"/>
</dbReference>
<dbReference type="InterPro" id="IPR036394">
    <property type="entry name" value="Ribosomal_uL22_sf"/>
</dbReference>
<dbReference type="NCBIfam" id="TIGR01044">
    <property type="entry name" value="rplV_bact"/>
    <property type="match status" value="1"/>
</dbReference>
<dbReference type="PANTHER" id="PTHR13501">
    <property type="entry name" value="CHLOROPLAST 50S RIBOSOMAL PROTEIN L22-RELATED"/>
    <property type="match status" value="1"/>
</dbReference>
<dbReference type="PANTHER" id="PTHR13501:SF8">
    <property type="entry name" value="LARGE RIBOSOMAL SUBUNIT PROTEIN UL22M"/>
    <property type="match status" value="1"/>
</dbReference>
<dbReference type="Pfam" id="PF00237">
    <property type="entry name" value="Ribosomal_L22"/>
    <property type="match status" value="1"/>
</dbReference>
<dbReference type="SUPFAM" id="SSF54843">
    <property type="entry name" value="Ribosomal protein L22"/>
    <property type="match status" value="1"/>
</dbReference>
<dbReference type="PROSITE" id="PS00464">
    <property type="entry name" value="RIBOSOMAL_L22"/>
    <property type="match status" value="1"/>
</dbReference>
<organism>
    <name type="scientific">Thermus thermophilus (strain ATCC BAA-163 / DSM 7039 / HB27)</name>
    <dbReference type="NCBI Taxonomy" id="262724"/>
    <lineage>
        <taxon>Bacteria</taxon>
        <taxon>Thermotogati</taxon>
        <taxon>Deinococcota</taxon>
        <taxon>Deinococci</taxon>
        <taxon>Thermales</taxon>
        <taxon>Thermaceae</taxon>
        <taxon>Thermus</taxon>
    </lineage>
</organism>
<feature type="chain" id="PRO_0000125248" description="Large ribosomal subunit protein uL22">
    <location>
        <begin position="1"/>
        <end position="113"/>
    </location>
</feature>
<feature type="strand" evidence="3">
    <location>
        <begin position="6"/>
        <end position="12"/>
    </location>
</feature>
<feature type="helix" evidence="3">
    <location>
        <begin position="14"/>
        <end position="21"/>
    </location>
</feature>
<feature type="turn" evidence="3">
    <location>
        <begin position="22"/>
        <end position="26"/>
    </location>
</feature>
<feature type="helix" evidence="3">
    <location>
        <begin position="29"/>
        <end position="38"/>
    </location>
</feature>
<feature type="helix" evidence="3">
    <location>
        <begin position="42"/>
        <end position="62"/>
    </location>
</feature>
<feature type="turn" evidence="3">
    <location>
        <begin position="66"/>
        <end position="68"/>
    </location>
</feature>
<feature type="strand" evidence="3">
    <location>
        <begin position="70"/>
        <end position="73"/>
    </location>
</feature>
<feature type="strand" evidence="3">
    <location>
        <begin position="76"/>
        <end position="87"/>
    </location>
</feature>
<feature type="helix" evidence="3">
    <location>
        <begin position="89"/>
        <end position="91"/>
    </location>
</feature>
<feature type="strand" evidence="3">
    <location>
        <begin position="93"/>
        <end position="104"/>
    </location>
</feature>
<feature type="strand" evidence="3">
    <location>
        <begin position="106"/>
        <end position="108"/>
    </location>
</feature>
<keyword id="KW-0002">3D-structure</keyword>
<keyword id="KW-0687">Ribonucleoprotein</keyword>
<keyword id="KW-0689">Ribosomal protein</keyword>
<keyword id="KW-0694">RNA-binding</keyword>
<keyword id="KW-0699">rRNA-binding</keyword>
<sequence>MEAKAIARYVRISPRKVRLVVDLIRGKSLEEARNILRYTNKRGAYFVAKVLESAAANAVNNHDMLEDRLYVKAAYVDEGPALKRVLPRARGRADIIKKRTSHITVILGEKHGK</sequence>
<evidence type="ECO:0000255" key="1">
    <source>
        <dbReference type="HAMAP-Rule" id="MF_01331"/>
    </source>
</evidence>
<evidence type="ECO:0000305" key="2"/>
<evidence type="ECO:0007829" key="3">
    <source>
        <dbReference type="PDB" id="4V67"/>
    </source>
</evidence>